<evidence type="ECO:0000255" key="1">
    <source>
        <dbReference type="HAMAP-Rule" id="MF_01357"/>
    </source>
</evidence>
<gene>
    <name evidence="1" type="primary">nuoC</name>
    <name type="ordered locus">BMEA_A0846</name>
</gene>
<accession>C0RIE1</accession>
<name>NUOC_BRUMB</name>
<keyword id="KW-0997">Cell inner membrane</keyword>
<keyword id="KW-1003">Cell membrane</keyword>
<keyword id="KW-0472">Membrane</keyword>
<keyword id="KW-0520">NAD</keyword>
<keyword id="KW-0874">Quinone</keyword>
<keyword id="KW-1278">Translocase</keyword>
<keyword id="KW-0813">Transport</keyword>
<keyword id="KW-0830">Ubiquinone</keyword>
<proteinExistence type="inferred from homology"/>
<protein>
    <recommendedName>
        <fullName evidence="1">NADH-quinone oxidoreductase subunit C</fullName>
        <ecNumber evidence="1">7.1.1.-</ecNumber>
    </recommendedName>
    <alternativeName>
        <fullName evidence="1">NADH dehydrogenase I subunit C</fullName>
    </alternativeName>
    <alternativeName>
        <fullName evidence="1">NDH-1 subunit C</fullName>
    </alternativeName>
</protein>
<organism>
    <name type="scientific">Brucella melitensis biotype 2 (strain ATCC 23457)</name>
    <dbReference type="NCBI Taxonomy" id="546272"/>
    <lineage>
        <taxon>Bacteria</taxon>
        <taxon>Pseudomonadati</taxon>
        <taxon>Pseudomonadota</taxon>
        <taxon>Alphaproteobacteria</taxon>
        <taxon>Hyphomicrobiales</taxon>
        <taxon>Brucellaceae</taxon>
        <taxon>Brucella/Ochrobactrum group</taxon>
        <taxon>Brucella</taxon>
    </lineage>
</organism>
<feature type="chain" id="PRO_1000166671" description="NADH-quinone oxidoreductase subunit C">
    <location>
        <begin position="1"/>
        <end position="202"/>
    </location>
</feature>
<reference key="1">
    <citation type="submission" date="2009-03" db="EMBL/GenBank/DDBJ databases">
        <title>Brucella melitensis ATCC 23457 whole genome shotgun sequencing project.</title>
        <authorList>
            <person name="Setubal J.C."/>
            <person name="Boyle S."/>
            <person name="Crasta O.R."/>
            <person name="Gillespie J.J."/>
            <person name="Kenyon R.W."/>
            <person name="Lu J."/>
            <person name="Mane S."/>
            <person name="Nagrani S."/>
            <person name="Shallom J.M."/>
            <person name="Shallom S."/>
            <person name="Shukla M."/>
            <person name="Snyder E.E."/>
            <person name="Sobral B.W."/>
            <person name="Wattam A.R."/>
            <person name="Will R."/>
            <person name="Williams K."/>
            <person name="Yoo H."/>
            <person name="Munk C."/>
            <person name="Tapia R."/>
            <person name="Han C."/>
            <person name="Detter J.C."/>
            <person name="Bruce D."/>
            <person name="Brettin T.S."/>
        </authorList>
    </citation>
    <scope>NUCLEOTIDE SEQUENCE [LARGE SCALE GENOMIC DNA]</scope>
    <source>
        <strain>ATCC 23457</strain>
    </source>
</reference>
<comment type="function">
    <text evidence="1">NDH-1 shuttles electrons from NADH, via FMN and iron-sulfur (Fe-S) centers, to quinones in the respiratory chain. The immediate electron acceptor for the enzyme in this species is believed to be ubiquinone. Couples the redox reaction to proton translocation (for every two electrons transferred, four hydrogen ions are translocated across the cytoplasmic membrane), and thus conserves the redox energy in a proton gradient.</text>
</comment>
<comment type="catalytic activity">
    <reaction evidence="1">
        <text>a quinone + NADH + 5 H(+)(in) = a quinol + NAD(+) + 4 H(+)(out)</text>
        <dbReference type="Rhea" id="RHEA:57888"/>
        <dbReference type="ChEBI" id="CHEBI:15378"/>
        <dbReference type="ChEBI" id="CHEBI:24646"/>
        <dbReference type="ChEBI" id="CHEBI:57540"/>
        <dbReference type="ChEBI" id="CHEBI:57945"/>
        <dbReference type="ChEBI" id="CHEBI:132124"/>
    </reaction>
</comment>
<comment type="subunit">
    <text evidence="1">NDH-1 is composed of 14 different subunits. Subunits NuoB, C, D, E, F, and G constitute the peripheral sector of the complex.</text>
</comment>
<comment type="subcellular location">
    <subcellularLocation>
        <location evidence="1">Cell inner membrane</location>
        <topology evidence="1">Peripheral membrane protein</topology>
        <orientation evidence="1">Cytoplasmic side</orientation>
    </subcellularLocation>
</comment>
<comment type="similarity">
    <text evidence="1">Belongs to the complex I 30 kDa subunit family.</text>
</comment>
<sequence>MSEEALGELSGYIRERLGDAIEEANLAYGELTLCVPVASLIGVLTFLRDDVQCQFVNLTDISGVDYPQREKRFDVVYQLLSPRQNQRIRVKVQADEDTLVPSAVPVFFGAEWYEREAYDMYGILFSGHPDLRRILTDYGFEGHPLRKDFPLTGFVEVRYNDELKRVVYEPVQLRQEFRNFDFLSPWEGTDYVLPGDEKAKTN</sequence>
<dbReference type="EC" id="7.1.1.-" evidence="1"/>
<dbReference type="EMBL" id="CP001488">
    <property type="protein sequence ID" value="ACO00599.1"/>
    <property type="molecule type" value="Genomic_DNA"/>
</dbReference>
<dbReference type="RefSeq" id="WP_002967574.1">
    <property type="nucleotide sequence ID" value="NC_012441.1"/>
</dbReference>
<dbReference type="SMR" id="C0RIE1"/>
<dbReference type="KEGG" id="bmi:BMEA_A0846"/>
<dbReference type="HOGENOM" id="CLU_042628_2_1_5"/>
<dbReference type="Proteomes" id="UP000001748">
    <property type="component" value="Chromosome I"/>
</dbReference>
<dbReference type="GO" id="GO:0005886">
    <property type="term" value="C:plasma membrane"/>
    <property type="evidence" value="ECO:0007669"/>
    <property type="project" value="UniProtKB-SubCell"/>
</dbReference>
<dbReference type="GO" id="GO:0008137">
    <property type="term" value="F:NADH dehydrogenase (ubiquinone) activity"/>
    <property type="evidence" value="ECO:0007669"/>
    <property type="project" value="InterPro"/>
</dbReference>
<dbReference type="GO" id="GO:0050136">
    <property type="term" value="F:NADH:ubiquinone reductase (non-electrogenic) activity"/>
    <property type="evidence" value="ECO:0007669"/>
    <property type="project" value="UniProtKB-UniRule"/>
</dbReference>
<dbReference type="GO" id="GO:0048038">
    <property type="term" value="F:quinone binding"/>
    <property type="evidence" value="ECO:0007669"/>
    <property type="project" value="UniProtKB-KW"/>
</dbReference>
<dbReference type="Gene3D" id="3.30.460.80">
    <property type="entry name" value="NADH:ubiquinone oxidoreductase, 30kDa subunit"/>
    <property type="match status" value="1"/>
</dbReference>
<dbReference type="HAMAP" id="MF_01357">
    <property type="entry name" value="NDH1_NuoC"/>
    <property type="match status" value="1"/>
</dbReference>
<dbReference type="InterPro" id="IPR010218">
    <property type="entry name" value="NADH_DH_suC"/>
</dbReference>
<dbReference type="InterPro" id="IPR037232">
    <property type="entry name" value="NADH_quin_OxRdtase_su_C/D-like"/>
</dbReference>
<dbReference type="InterPro" id="IPR001268">
    <property type="entry name" value="NADH_UbQ_OxRdtase_30kDa_su"/>
</dbReference>
<dbReference type="InterPro" id="IPR020396">
    <property type="entry name" value="NADH_UbQ_OxRdtase_CS"/>
</dbReference>
<dbReference type="NCBIfam" id="TIGR01961">
    <property type="entry name" value="NuoC_fam"/>
    <property type="match status" value="1"/>
</dbReference>
<dbReference type="NCBIfam" id="NF004730">
    <property type="entry name" value="PRK06074.1-1"/>
    <property type="match status" value="1"/>
</dbReference>
<dbReference type="NCBIfam" id="NF004733">
    <property type="entry name" value="PRK06074.1-5"/>
    <property type="match status" value="1"/>
</dbReference>
<dbReference type="PANTHER" id="PTHR10884:SF14">
    <property type="entry name" value="NADH DEHYDROGENASE [UBIQUINONE] IRON-SULFUR PROTEIN 3, MITOCHONDRIAL"/>
    <property type="match status" value="1"/>
</dbReference>
<dbReference type="PANTHER" id="PTHR10884">
    <property type="entry name" value="NADH DEHYDROGENASE UBIQUINONE IRON-SULFUR PROTEIN 3"/>
    <property type="match status" value="1"/>
</dbReference>
<dbReference type="Pfam" id="PF00329">
    <property type="entry name" value="Complex1_30kDa"/>
    <property type="match status" value="1"/>
</dbReference>
<dbReference type="SUPFAM" id="SSF143243">
    <property type="entry name" value="Nqo5-like"/>
    <property type="match status" value="1"/>
</dbReference>
<dbReference type="PROSITE" id="PS00542">
    <property type="entry name" value="COMPLEX1_30K"/>
    <property type="match status" value="1"/>
</dbReference>